<accession>P40496</accession>
<accession>D6VVJ4</accession>
<feature type="chain" id="PRO_0000202972" description="Small ribosomal subunit protein mS23">
    <location>
        <begin position="1"/>
        <end position="264"/>
    </location>
</feature>
<feature type="region of interest" description="Disordered" evidence="1">
    <location>
        <begin position="233"/>
        <end position="264"/>
    </location>
</feature>
<feature type="turn" evidence="14">
    <location>
        <begin position="6"/>
        <end position="8"/>
    </location>
</feature>
<feature type="helix" evidence="14">
    <location>
        <begin position="10"/>
        <end position="20"/>
    </location>
</feature>
<feature type="helix" evidence="14">
    <location>
        <begin position="30"/>
        <end position="35"/>
    </location>
</feature>
<feature type="turn" evidence="14">
    <location>
        <begin position="51"/>
        <end position="53"/>
    </location>
</feature>
<feature type="strand" evidence="14">
    <location>
        <begin position="56"/>
        <end position="58"/>
    </location>
</feature>
<feature type="helix" evidence="14">
    <location>
        <begin position="63"/>
        <end position="65"/>
    </location>
</feature>
<feature type="turn" evidence="14">
    <location>
        <begin position="81"/>
        <end position="84"/>
    </location>
</feature>
<feature type="helix" evidence="14">
    <location>
        <begin position="88"/>
        <end position="92"/>
    </location>
</feature>
<feature type="helix" evidence="14">
    <location>
        <begin position="100"/>
        <end position="111"/>
    </location>
</feature>
<feature type="helix" evidence="14">
    <location>
        <begin position="113"/>
        <end position="117"/>
    </location>
</feature>
<feature type="helix" evidence="14">
    <location>
        <begin position="127"/>
        <end position="129"/>
    </location>
</feature>
<feature type="helix" evidence="14">
    <location>
        <begin position="146"/>
        <end position="158"/>
    </location>
</feature>
<feature type="strand" evidence="13">
    <location>
        <begin position="161"/>
        <end position="164"/>
    </location>
</feature>
<feature type="helix" evidence="14">
    <location>
        <begin position="165"/>
        <end position="195"/>
    </location>
</feature>
<feature type="turn" evidence="14">
    <location>
        <begin position="196"/>
        <end position="198"/>
    </location>
</feature>
<feature type="helix" evidence="14">
    <location>
        <begin position="205"/>
        <end position="232"/>
    </location>
</feature>
<keyword id="KW-0002">3D-structure</keyword>
<keyword id="KW-0496">Mitochondrion</keyword>
<keyword id="KW-1185">Reference proteome</keyword>
<keyword id="KW-0687">Ribonucleoprotein</keyword>
<keyword id="KW-0689">Ribosomal protein</keyword>
<proteinExistence type="evidence at protein level"/>
<name>RT25_YEAST</name>
<evidence type="ECO:0000256" key="1">
    <source>
        <dbReference type="SAM" id="MobiDB-lite"/>
    </source>
</evidence>
<evidence type="ECO:0000269" key="2">
    <source>
    </source>
</evidence>
<evidence type="ECO:0000269" key="3">
    <source>
    </source>
</evidence>
<evidence type="ECO:0000269" key="4">
    <source>
    </source>
</evidence>
<evidence type="ECO:0000269" key="5">
    <source>
    </source>
</evidence>
<evidence type="ECO:0000269" key="6">
    <source>
    </source>
</evidence>
<evidence type="ECO:0000269" key="7">
    <source>
    </source>
</evidence>
<evidence type="ECO:0000269" key="8">
    <source>
    </source>
</evidence>
<evidence type="ECO:0000303" key="9">
    <source>
    </source>
</evidence>
<evidence type="ECO:0000305" key="10"/>
<evidence type="ECO:0000305" key="11">
    <source>
    </source>
</evidence>
<evidence type="ECO:0000305" key="12">
    <source>
    </source>
</evidence>
<evidence type="ECO:0007829" key="13">
    <source>
        <dbReference type="PDB" id="8D8K"/>
    </source>
</evidence>
<evidence type="ECO:0007829" key="14">
    <source>
        <dbReference type="PDB" id="8D8L"/>
    </source>
</evidence>
<protein>
    <recommendedName>
        <fullName evidence="9">Small ribosomal subunit protein mS23</fullName>
    </recommendedName>
    <alternativeName>
        <fullName>37S ribosomal protein S25, mitochondrial</fullName>
    </alternativeName>
</protein>
<gene>
    <name type="primary">RSM25</name>
    <name type="ordered locus">YIL093C</name>
</gene>
<comment type="function">
    <text evidence="11 12">Component of the mitochondrial ribosome (mitoribosome), a dedicated translation machinery responsible for the synthesis of mitochondrial genome-encoded proteins, including at least some of the essential transmembrane subunits of the mitochondrial respiratory chain. The mitoribosomes are attached to the mitochondrial inner membrane and translation products are cotranslationally integrated into the membrane.</text>
</comment>
<comment type="subunit">
    <text evidence="2 3 8">Component of the mitochondrial small ribosomal subunit (mt-SSU). Mature yeast 74S mitochondrial ribosomes consist of a small (37S) and a large (54S) subunit. The 37S small subunit contains a 15S ribosomal RNA (15S mt-rRNA) and 34 different proteins. The 54S large subunit contains a 21S rRNA (21S mt-rRNA) and 46 different proteins.</text>
</comment>
<comment type="subcellular location">
    <subcellularLocation>
        <location evidence="2 4 6">Mitochondrion</location>
    </subcellularLocation>
    <text evidence="7">Mitoribosomes are tethered to the mitochondrial inner membrane and spatially aligned with the membrane insertion machinery through two distinct membrane contact sites, formed by the 21S rRNA expansion segment 96-ES1 and the inner membrane protein MBA1.</text>
</comment>
<comment type="miscellaneous">
    <text evidence="5">Present with 1920 molecules/cell in log phase SD medium.</text>
</comment>
<comment type="similarity">
    <text evidence="10">Belongs to the mitochondrion-specific ribosomal protein mS23 family.</text>
</comment>
<dbReference type="EMBL" id="Z46728">
    <property type="protein sequence ID" value="CAA86701.1"/>
    <property type="molecule type" value="Genomic_DNA"/>
</dbReference>
<dbReference type="EMBL" id="BK006942">
    <property type="protein sequence ID" value="DAA08460.1"/>
    <property type="molecule type" value="Genomic_DNA"/>
</dbReference>
<dbReference type="PIR" id="S49787">
    <property type="entry name" value="S49787"/>
</dbReference>
<dbReference type="RefSeq" id="NP_012173.3">
    <property type="nucleotide sequence ID" value="NM_001179441.3"/>
</dbReference>
<dbReference type="PDB" id="5MRC">
    <property type="method" value="EM"/>
    <property type="resolution" value="3.25 A"/>
    <property type="chains" value="UU=1-233"/>
</dbReference>
<dbReference type="PDB" id="5MRE">
    <property type="method" value="EM"/>
    <property type="resolution" value="3.75 A"/>
    <property type="chains" value="UU=1-233"/>
</dbReference>
<dbReference type="PDB" id="5MRF">
    <property type="method" value="EM"/>
    <property type="resolution" value="4.97 A"/>
    <property type="chains" value="UU=1-233"/>
</dbReference>
<dbReference type="PDB" id="8D8K">
    <property type="method" value="EM"/>
    <property type="resolution" value="3.13 A"/>
    <property type="chains" value="U=1-264"/>
</dbReference>
<dbReference type="PDB" id="8D8L">
    <property type="method" value="EM"/>
    <property type="resolution" value="2.60 A"/>
    <property type="chains" value="U=1-264"/>
</dbReference>
<dbReference type="PDB" id="8OM2">
    <property type="method" value="EM"/>
    <property type="resolution" value="2.57 A"/>
    <property type="chains" value="U=1-264"/>
</dbReference>
<dbReference type="PDB" id="8OM3">
    <property type="method" value="EM"/>
    <property type="resolution" value="2.87 A"/>
    <property type="chains" value="U=1-264"/>
</dbReference>
<dbReference type="PDB" id="8OM4">
    <property type="method" value="EM"/>
    <property type="resolution" value="2.32 A"/>
    <property type="chains" value="U=1-264"/>
</dbReference>
<dbReference type="PDBsum" id="5MRC"/>
<dbReference type="PDBsum" id="5MRE"/>
<dbReference type="PDBsum" id="5MRF"/>
<dbReference type="PDBsum" id="8D8K"/>
<dbReference type="PDBsum" id="8D8L"/>
<dbReference type="PDBsum" id="8OM2"/>
<dbReference type="PDBsum" id="8OM3"/>
<dbReference type="PDBsum" id="8OM4"/>
<dbReference type="EMDB" id="EMD-16966"/>
<dbReference type="EMDB" id="EMD-16967"/>
<dbReference type="EMDB" id="EMD-16968"/>
<dbReference type="EMDB" id="EMD-27250"/>
<dbReference type="EMDB" id="EMD-27251"/>
<dbReference type="EMDB" id="EMD-3551"/>
<dbReference type="EMDB" id="EMD-3552"/>
<dbReference type="EMDB" id="EMD-3553"/>
<dbReference type="SMR" id="P40496"/>
<dbReference type="BioGRID" id="34899">
    <property type="interactions" value="88"/>
</dbReference>
<dbReference type="ComplexPortal" id="CPX-1603">
    <property type="entry name" value="37S mitochondrial small ribosomal subunit"/>
</dbReference>
<dbReference type="DIP" id="DIP-6345N"/>
<dbReference type="FunCoup" id="P40496">
    <property type="interactions" value="188"/>
</dbReference>
<dbReference type="IntAct" id="P40496">
    <property type="interactions" value="41"/>
</dbReference>
<dbReference type="MINT" id="P40496"/>
<dbReference type="STRING" id="4932.YIL093C"/>
<dbReference type="iPTMnet" id="P40496"/>
<dbReference type="PaxDb" id="4932-YIL093C"/>
<dbReference type="PeptideAtlas" id="P40496"/>
<dbReference type="EnsemblFungi" id="YIL093C_mRNA">
    <property type="protein sequence ID" value="YIL093C"/>
    <property type="gene ID" value="YIL093C"/>
</dbReference>
<dbReference type="GeneID" id="854715"/>
<dbReference type="KEGG" id="sce:YIL093C"/>
<dbReference type="AGR" id="SGD:S000001355"/>
<dbReference type="SGD" id="S000001355">
    <property type="gene designation" value="RSM25"/>
</dbReference>
<dbReference type="VEuPathDB" id="FungiDB:YIL093C"/>
<dbReference type="eggNOG" id="ENOG502RZQQ">
    <property type="taxonomic scope" value="Eukaryota"/>
</dbReference>
<dbReference type="HOGENOM" id="CLU_081350_0_0_1"/>
<dbReference type="InParanoid" id="P40496"/>
<dbReference type="OMA" id="ENWKIWA"/>
<dbReference type="OrthoDB" id="5542239at2759"/>
<dbReference type="BioCyc" id="YEAST:G3O-31353-MONOMER"/>
<dbReference type="BioGRID-ORCS" id="854715">
    <property type="hits" value="3 hits in 10 CRISPR screens"/>
</dbReference>
<dbReference type="PRO" id="PR:P40496"/>
<dbReference type="Proteomes" id="UP000002311">
    <property type="component" value="Chromosome IX"/>
</dbReference>
<dbReference type="RNAct" id="P40496">
    <property type="molecule type" value="protein"/>
</dbReference>
<dbReference type="GO" id="GO:0005743">
    <property type="term" value="C:mitochondrial inner membrane"/>
    <property type="evidence" value="ECO:0000303"/>
    <property type="project" value="ComplexPortal"/>
</dbReference>
<dbReference type="GO" id="GO:0005763">
    <property type="term" value="C:mitochondrial small ribosomal subunit"/>
    <property type="evidence" value="ECO:0000314"/>
    <property type="project" value="SGD"/>
</dbReference>
<dbReference type="GO" id="GO:0005739">
    <property type="term" value="C:mitochondrion"/>
    <property type="evidence" value="ECO:0007005"/>
    <property type="project" value="SGD"/>
</dbReference>
<dbReference type="GO" id="GO:0003735">
    <property type="term" value="F:structural constituent of ribosome"/>
    <property type="evidence" value="ECO:0000314"/>
    <property type="project" value="SGD"/>
</dbReference>
<dbReference type="GO" id="GO:0032543">
    <property type="term" value="P:mitochondrial translation"/>
    <property type="evidence" value="ECO:0000303"/>
    <property type="project" value="ComplexPortal"/>
</dbReference>
<dbReference type="CDD" id="cd23701">
    <property type="entry name" value="At1g26750"/>
    <property type="match status" value="1"/>
</dbReference>
<dbReference type="InterPro" id="IPR016939">
    <property type="entry name" value="Ribosomal_mS23_fun"/>
</dbReference>
<dbReference type="PANTHER" id="PTHR37799">
    <property type="entry name" value="37S RIBOSOMAL PROTEIN S25, MITOCHONDRIAL"/>
    <property type="match status" value="1"/>
</dbReference>
<dbReference type="PANTHER" id="PTHR37799:SF1">
    <property type="entry name" value="SMALL RIBOSOMAL SUBUNIT PROTEIN MS23"/>
    <property type="match status" value="1"/>
</dbReference>
<dbReference type="Pfam" id="PF13741">
    <property type="entry name" value="MRP-S25"/>
    <property type="match status" value="1"/>
</dbReference>
<dbReference type="PIRSF" id="PIRSF029764">
    <property type="entry name" value="RSM25"/>
    <property type="match status" value="1"/>
</dbReference>
<sequence>MKIQTNAVNVLQRTSAYLKSGLLKETPAWYNVVASIPPSTKFTREPRFKNPSNGHIIGKLVDVTEQPHANNKGLYKTRPNSSDKRVGVKRLYRPPKLTYVEDRLRSLFYKQHPWELSRPKILVENEIGDENYDWSHMLQIGRPLDGESVIQRTMYLIKTKQYGDMVEAYDHARYEFYALRMQEETEQQVALEEAEMFGSLFGVSAIEHGIQKEQEVLDVWEKKVVEETELMAARTSNPAGSWKDDTTLNTAQEEESTTSENLHF</sequence>
<organism>
    <name type="scientific">Saccharomyces cerevisiae (strain ATCC 204508 / S288c)</name>
    <name type="common">Baker's yeast</name>
    <dbReference type="NCBI Taxonomy" id="559292"/>
    <lineage>
        <taxon>Eukaryota</taxon>
        <taxon>Fungi</taxon>
        <taxon>Dikarya</taxon>
        <taxon>Ascomycota</taxon>
        <taxon>Saccharomycotina</taxon>
        <taxon>Saccharomycetes</taxon>
        <taxon>Saccharomycetales</taxon>
        <taxon>Saccharomycetaceae</taxon>
        <taxon>Saccharomyces</taxon>
    </lineage>
</organism>
<reference key="1">
    <citation type="journal article" date="1997" name="Nature">
        <title>The nucleotide sequence of Saccharomyces cerevisiae chromosome IX.</title>
        <authorList>
            <person name="Churcher C.M."/>
            <person name="Bowman S."/>
            <person name="Badcock K."/>
            <person name="Bankier A.T."/>
            <person name="Brown D."/>
            <person name="Chillingworth T."/>
            <person name="Connor R."/>
            <person name="Devlin K."/>
            <person name="Gentles S."/>
            <person name="Hamlin N."/>
            <person name="Harris D.E."/>
            <person name="Horsnell T."/>
            <person name="Hunt S."/>
            <person name="Jagels K."/>
            <person name="Jones M."/>
            <person name="Lye G."/>
            <person name="Moule S."/>
            <person name="Odell C."/>
            <person name="Pearson D."/>
            <person name="Rajandream M.A."/>
            <person name="Rice P."/>
            <person name="Rowley N."/>
            <person name="Skelton J."/>
            <person name="Smith V."/>
            <person name="Walsh S.V."/>
            <person name="Whitehead S."/>
            <person name="Barrell B.G."/>
        </authorList>
    </citation>
    <scope>NUCLEOTIDE SEQUENCE [LARGE SCALE GENOMIC DNA]</scope>
    <source>
        <strain>ATCC 204508 / S288c</strain>
    </source>
</reference>
<reference key="2">
    <citation type="journal article" date="2014" name="G3 (Bethesda)">
        <title>The reference genome sequence of Saccharomyces cerevisiae: Then and now.</title>
        <authorList>
            <person name="Engel S.R."/>
            <person name="Dietrich F.S."/>
            <person name="Fisk D.G."/>
            <person name="Binkley G."/>
            <person name="Balakrishnan R."/>
            <person name="Costanzo M.C."/>
            <person name="Dwight S.S."/>
            <person name="Hitz B.C."/>
            <person name="Karra K."/>
            <person name="Nash R.S."/>
            <person name="Weng S."/>
            <person name="Wong E.D."/>
            <person name="Lloyd P."/>
            <person name="Skrzypek M.S."/>
            <person name="Miyasato S.R."/>
            <person name="Simison M."/>
            <person name="Cherry J.M."/>
        </authorList>
    </citation>
    <scope>GENOME REANNOTATION</scope>
    <source>
        <strain>ATCC 204508 / S288c</strain>
    </source>
</reference>
<reference key="3">
    <citation type="journal article" date="2001" name="J. Biol. Chem.">
        <title>Identification of 12 new yeast mitochondrial ribosomal proteins including 6 that have no prokaryotic homologues.</title>
        <authorList>
            <person name="Saveanu C."/>
            <person name="Fromont-Racine M."/>
            <person name="Harington A."/>
            <person name="Ricard F."/>
            <person name="Namane A."/>
            <person name="Jacquier A."/>
        </authorList>
    </citation>
    <scope>SUBCELLULAR LOCATION</scope>
    <scope>IDENTIFICATION IN THE MITOCHONDRIAL RIBOSOMAL SMALL COMPLEX</scope>
    <scope>IDENTIFICATION BY MASS SPECTROMETRY</scope>
</reference>
<reference key="4">
    <citation type="journal article" date="2002" name="Eur. J. Biochem.">
        <title>Tag-mediated isolation of yeast mitochondrial ribosome and mass spectrometric identification of its new components.</title>
        <authorList>
            <person name="Gan X."/>
            <person name="Kitakawa M."/>
            <person name="Yoshino K."/>
            <person name="Oshiro N."/>
            <person name="Yonezawa K."/>
            <person name="Isono K."/>
        </authorList>
    </citation>
    <scope>IDENTIFICATION IN THE MITOCHONDRIAL RIBOSOMAL SMALL COMPLEX</scope>
    <scope>IDENTIFICATION BY MASS SPECTROMETRY</scope>
</reference>
<reference key="5">
    <citation type="journal article" date="2003" name="Nature">
        <title>Global analysis of protein localization in budding yeast.</title>
        <authorList>
            <person name="Huh W.-K."/>
            <person name="Falvo J.V."/>
            <person name="Gerke L.C."/>
            <person name="Carroll A.S."/>
            <person name="Howson R.W."/>
            <person name="Weissman J.S."/>
            <person name="O'Shea E.K."/>
        </authorList>
    </citation>
    <scope>SUBCELLULAR LOCATION [LARGE SCALE ANALYSIS]</scope>
</reference>
<reference key="6">
    <citation type="journal article" date="2003" name="Nature">
        <title>Global analysis of protein expression in yeast.</title>
        <authorList>
            <person name="Ghaemmaghami S."/>
            <person name="Huh W.-K."/>
            <person name="Bower K."/>
            <person name="Howson R.W."/>
            <person name="Belle A."/>
            <person name="Dephoure N."/>
            <person name="O'Shea E.K."/>
            <person name="Weissman J.S."/>
        </authorList>
    </citation>
    <scope>LEVEL OF PROTEIN EXPRESSION [LARGE SCALE ANALYSIS]</scope>
</reference>
<reference key="7">
    <citation type="journal article" date="2006" name="J. Proteome Res.">
        <title>Toward the complete yeast mitochondrial proteome: multidimensional separation techniques for mitochondrial proteomics.</title>
        <authorList>
            <person name="Reinders J."/>
            <person name="Zahedi R.P."/>
            <person name="Pfanner N."/>
            <person name="Meisinger C."/>
            <person name="Sickmann A."/>
        </authorList>
    </citation>
    <scope>SUBCELLULAR LOCATION [LARGE SCALE ANALYSIS]</scope>
    <scope>IDENTIFICATION BY MASS SPECTROMETRY</scope>
</reference>
<reference key="8">
    <citation type="journal article" date="2012" name="Proc. Natl. Acad. Sci. U.S.A.">
        <title>N-terminal acetylome analyses and functional insights of the N-terminal acetyltransferase NatB.</title>
        <authorList>
            <person name="Van Damme P."/>
            <person name="Lasa M."/>
            <person name="Polevoda B."/>
            <person name="Gazquez C."/>
            <person name="Elosegui-Artola A."/>
            <person name="Kim D.S."/>
            <person name="De Juan-Pardo E."/>
            <person name="Demeyer K."/>
            <person name="Hole K."/>
            <person name="Larrea E."/>
            <person name="Timmerman E."/>
            <person name="Prieto J."/>
            <person name="Arnesen T."/>
            <person name="Sherman F."/>
            <person name="Gevaert K."/>
            <person name="Aldabe R."/>
        </authorList>
    </citation>
    <scope>IDENTIFICATION BY MASS SPECTROMETRY [LARGE SCALE ANALYSIS]</scope>
</reference>
<reference key="9">
    <citation type="journal article" date="2015" name="Nat. Commun.">
        <title>Organization of the mitochondrial translation machinery studied in situ by cryoelectron tomography.</title>
        <authorList>
            <person name="Pfeffer S."/>
            <person name="Woellhaf M.W."/>
            <person name="Herrmann J.M."/>
            <person name="Forster F."/>
        </authorList>
    </citation>
    <scope>SUBCELLULAR LOCATION</scope>
</reference>
<reference key="10">
    <citation type="journal article" date="2017" name="Science">
        <title>The structure of the yeast mitochondrial ribosome.</title>
        <authorList>
            <person name="Desai N."/>
            <person name="Brown A."/>
            <person name="Amunts A."/>
            <person name="Ramakrishnan V."/>
        </authorList>
    </citation>
    <scope>STRUCTURE BY ELECTRON MICROSCOPY (3.25 ANGSTROMS)</scope>
    <scope>SUBUNIT</scope>
</reference>